<sequence length="182" mass="20354">MDKFDANRRKLLALGGVALGAAILPTPAFATLSTPRPRILTLNNLHTGESIKAEFFDGRGYIQEELAKLNHFFRDYRANKIKSIDPGLFDQLYRLQGLLGTRKPVQLISGYRSIDTNNELRARSRGVAKKSYHTKGQAMDFHIEGIALSNIRKAALSMRAGGVGYYPRSNFVHIDTGPARHW</sequence>
<organism>
    <name type="scientific">Shigella flexneri</name>
    <dbReference type="NCBI Taxonomy" id="623"/>
    <lineage>
        <taxon>Bacteria</taxon>
        <taxon>Pseudomonadati</taxon>
        <taxon>Pseudomonadota</taxon>
        <taxon>Gammaproteobacteria</taxon>
        <taxon>Enterobacterales</taxon>
        <taxon>Enterobacteriaceae</taxon>
        <taxon>Shigella</taxon>
    </lineage>
</organism>
<name>MEPK_SHIFL</name>
<accession>P0AB09</accession>
<accession>P75848</accession>
<evidence type="ECO:0000250" key="1">
    <source>
        <dbReference type="UniProtKB" id="P0AB06"/>
    </source>
</evidence>
<evidence type="ECO:0000250" key="2">
    <source>
        <dbReference type="UniProtKB" id="Q06241"/>
    </source>
</evidence>
<evidence type="ECO:0000255" key="3">
    <source>
        <dbReference type="PROSITE-ProRule" id="PRU00648"/>
    </source>
</evidence>
<evidence type="ECO:0000305" key="4"/>
<keyword id="KW-0961">Cell wall biogenesis/degradation</keyword>
<keyword id="KW-0378">Hydrolase</keyword>
<keyword id="KW-0479">Metal-binding</keyword>
<keyword id="KW-0482">Metalloprotease</keyword>
<keyword id="KW-0645">Protease</keyword>
<keyword id="KW-1185">Reference proteome</keyword>
<keyword id="KW-0732">Signal</keyword>
<keyword id="KW-0862">Zinc</keyword>
<reference key="1">
    <citation type="journal article" date="2002" name="Nucleic Acids Res.">
        <title>Genome sequence of Shigella flexneri 2a: insights into pathogenicity through comparison with genomes of Escherichia coli K12 and O157.</title>
        <authorList>
            <person name="Jin Q."/>
            <person name="Yuan Z."/>
            <person name="Xu J."/>
            <person name="Wang Y."/>
            <person name="Shen Y."/>
            <person name="Lu W."/>
            <person name="Wang J."/>
            <person name="Liu H."/>
            <person name="Yang J."/>
            <person name="Yang F."/>
            <person name="Zhang X."/>
            <person name="Zhang J."/>
            <person name="Yang G."/>
            <person name="Wu H."/>
            <person name="Qu D."/>
            <person name="Dong J."/>
            <person name="Sun L."/>
            <person name="Xue Y."/>
            <person name="Zhao A."/>
            <person name="Gao Y."/>
            <person name="Zhu J."/>
            <person name="Kan B."/>
            <person name="Ding K."/>
            <person name="Chen S."/>
            <person name="Cheng H."/>
            <person name="Yao Z."/>
            <person name="He B."/>
            <person name="Chen R."/>
            <person name="Ma D."/>
            <person name="Qiang B."/>
            <person name="Wen Y."/>
            <person name="Hou Y."/>
            <person name="Yu J."/>
        </authorList>
    </citation>
    <scope>NUCLEOTIDE SEQUENCE [LARGE SCALE GENOMIC DNA]</scope>
    <source>
        <strain>301 / Serotype 2a</strain>
    </source>
</reference>
<reference key="2">
    <citation type="journal article" date="2003" name="Infect. Immun.">
        <title>Complete genome sequence and comparative genomics of Shigella flexneri serotype 2a strain 2457T.</title>
        <authorList>
            <person name="Wei J."/>
            <person name="Goldberg M.B."/>
            <person name="Burland V."/>
            <person name="Venkatesan M.M."/>
            <person name="Deng W."/>
            <person name="Fournier G."/>
            <person name="Mayhew G.F."/>
            <person name="Plunkett G. III"/>
            <person name="Rose D.J."/>
            <person name="Darling A."/>
            <person name="Mau B."/>
            <person name="Perna N.T."/>
            <person name="Payne S.M."/>
            <person name="Runyen-Janecky L.J."/>
            <person name="Zhou S."/>
            <person name="Schwartz D.C."/>
            <person name="Blattner F.R."/>
        </authorList>
    </citation>
    <scope>NUCLEOTIDE SEQUENCE [LARGE SCALE GENOMIC DNA]</scope>
    <source>
        <strain>ATCC 700930 / 2457T / Serotype 2a</strain>
    </source>
</reference>
<proteinExistence type="inferred from homology"/>
<feature type="signal peptide" description="Tat-type signal" evidence="3">
    <location>
        <begin position="1"/>
        <end position="30"/>
    </location>
</feature>
<feature type="chain" id="PRO_0000168776" description="Peptidoglycan L,D-endopeptidase MepK">
    <location>
        <begin position="31"/>
        <end position="182"/>
    </location>
</feature>
<feature type="binding site" evidence="2">
    <location>
        <position position="133"/>
    </location>
    <ligand>
        <name>Zn(2+)</name>
        <dbReference type="ChEBI" id="CHEBI:29105"/>
        <note>catalytic</note>
    </ligand>
</feature>
<feature type="binding site" evidence="2">
    <location>
        <position position="140"/>
    </location>
    <ligand>
        <name>Zn(2+)</name>
        <dbReference type="ChEBI" id="CHEBI:29105"/>
        <note>catalytic</note>
    </ligand>
</feature>
<feature type="binding site" evidence="2">
    <location>
        <position position="173"/>
    </location>
    <ligand>
        <name>Zn(2+)</name>
        <dbReference type="ChEBI" id="CHEBI:29105"/>
        <note>catalytic</note>
    </ligand>
</feature>
<gene>
    <name evidence="1" type="primary">mepK</name>
    <name type="synonym">ycbK</name>
    <name type="ordered locus">SF0923</name>
    <name type="ordered locus">S0987</name>
</gene>
<protein>
    <recommendedName>
        <fullName evidence="1">Peptidoglycan L,D-endopeptidase MepK</fullName>
        <ecNumber evidence="1">3.4.-.-</ecNumber>
    </recommendedName>
    <alternativeName>
        <fullName evidence="1">Murein endopeptidase K</fullName>
    </alternativeName>
</protein>
<comment type="function">
    <text evidence="1">L,D-endopeptidase that cleaves meso-diaminopimelic acid (mDAP)-mDAP cross-links in peptidoglycan. It works in conjunction with other elongation-specific D,D-endopeptidases to make space for efficient incorporation of nascent peptidoglycan strands into the sacculus and thus enable cell wall expansion.</text>
</comment>
<comment type="cofactor">
    <cofactor evidence="2">
        <name>Zn(2+)</name>
        <dbReference type="ChEBI" id="CHEBI:29105"/>
    </cofactor>
    <text evidence="2">Binds 1 zinc ion per subunit.</text>
</comment>
<comment type="pathway">
    <text evidence="1">Cell wall biogenesis; cell wall polysaccharide biosynthesis.</text>
</comment>
<comment type="PTM">
    <text evidence="3">Predicted to be exported by the Tat system. The position of the signal peptide cleavage has not been experimentally proven.</text>
</comment>
<comment type="similarity">
    <text evidence="4">Belongs to the peptidase M15 family.</text>
</comment>
<dbReference type="EC" id="3.4.-.-" evidence="1"/>
<dbReference type="EMBL" id="AE005674">
    <property type="protein sequence ID" value="AAN42552.2"/>
    <property type="molecule type" value="Genomic_DNA"/>
</dbReference>
<dbReference type="EMBL" id="AE014073">
    <property type="protein sequence ID" value="AAP16438.1"/>
    <property type="molecule type" value="Genomic_DNA"/>
</dbReference>
<dbReference type="RefSeq" id="NP_706845.2">
    <property type="nucleotide sequence ID" value="NC_004337.2"/>
</dbReference>
<dbReference type="RefSeq" id="WP_001295932.1">
    <property type="nucleotide sequence ID" value="NZ_WPGW01000177.1"/>
</dbReference>
<dbReference type="STRING" id="198214.SF0923"/>
<dbReference type="PaxDb" id="198214-SF0923"/>
<dbReference type="DNASU" id="1077395"/>
<dbReference type="GeneID" id="1026200"/>
<dbReference type="KEGG" id="sfl:SF0923"/>
<dbReference type="KEGG" id="sfx:S0987"/>
<dbReference type="PATRIC" id="fig|198214.7.peg.1074"/>
<dbReference type="HOGENOM" id="CLU_080400_1_2_6"/>
<dbReference type="UniPathway" id="UPA00963"/>
<dbReference type="Proteomes" id="UP000001006">
    <property type="component" value="Chromosome"/>
</dbReference>
<dbReference type="Proteomes" id="UP000002673">
    <property type="component" value="Chromosome"/>
</dbReference>
<dbReference type="CDD" id="cd14844">
    <property type="entry name" value="Zn-DD-carboxypeptidase_like"/>
    <property type="match status" value="1"/>
</dbReference>
<dbReference type="Gene3D" id="3.30.1380.10">
    <property type="match status" value="1"/>
</dbReference>
<dbReference type="InterPro" id="IPR010275">
    <property type="entry name" value="DUF882"/>
</dbReference>
<dbReference type="InterPro" id="IPR009045">
    <property type="entry name" value="Hedgehog_sig/DD-Pept_Zn-bd_sf"/>
</dbReference>
<dbReference type="InterPro" id="IPR006311">
    <property type="entry name" value="TAT_signal"/>
</dbReference>
<dbReference type="PANTHER" id="PTHR37425">
    <property type="match status" value="1"/>
</dbReference>
<dbReference type="PANTHER" id="PTHR37425:SF1">
    <property type="entry name" value="OUTER MEMBRANE PROTEIN"/>
    <property type="match status" value="1"/>
</dbReference>
<dbReference type="Pfam" id="PF05951">
    <property type="entry name" value="Peptidase_M15_2"/>
    <property type="match status" value="1"/>
</dbReference>
<dbReference type="SUPFAM" id="SSF55166">
    <property type="entry name" value="Hedgehog/DD-peptidase"/>
    <property type="match status" value="1"/>
</dbReference>
<dbReference type="PROSITE" id="PS51318">
    <property type="entry name" value="TAT"/>
    <property type="match status" value="1"/>
</dbReference>